<sequence>MKAFYAFCVVLLVFGSVSEAKFDDFEDEEDIVEYDDNDFAEFEDVMEDSVTESPQRVISTEDDEDEATVELEGQDESQEGDFEDADTQEGDTESEPYDDEEFEGYEDKPDTSSNKNKDPITIVDVPAHLQNSWESYYLEILMVTGLLAYIMNYIIGKNKNSRLAQAWFNSHRELLESNFTLVGDDGTNKEATSTGKLNQENEHIYNLWCSGRVCCEGMLIQLRFLKRQDLLNVLARMMRPVSDQVQIKVTMNDEDMDTYVFAVGTRKALLRLQKEMQDLSEFCSDKPKSGAKYGLPDSLAILSEMGEVTEGMMDTKMVHFLTHYADKIESVHFSDQFSGPKIMQEEGQPLKLPDTKRTLLFTFNVPGSGNTYPKDMESLLPLMNMVIYSIDKAKKFRLNREGKQKADKNRARVEENFLKLTHVQRQEAAQSRREEKKRAEKERIMNEEDPEKQRRLEEAALRREQKKLEKKQMKMKQIKVKAM</sequence>
<accession>Q9D024</accession>
<accession>B1AR94</accession>
<accession>Q3TSB5</accession>
<accession>Q3V1S7</accession>
<accession>Q8C5D9</accession>
<accession>Q920S6</accession>
<name>CCD47_MOUSE</name>
<evidence type="ECO:0000250" key="1">
    <source>
        <dbReference type="UniProtKB" id="A0A8I3P7X4"/>
    </source>
</evidence>
<evidence type="ECO:0000250" key="2">
    <source>
        <dbReference type="UniProtKB" id="Q96A33"/>
    </source>
</evidence>
<evidence type="ECO:0000255" key="3"/>
<evidence type="ECO:0000256" key="4">
    <source>
        <dbReference type="SAM" id="MobiDB-lite"/>
    </source>
</evidence>
<evidence type="ECO:0000269" key="5">
    <source>
    </source>
</evidence>
<evidence type="ECO:0000303" key="6">
    <source>
    </source>
</evidence>
<evidence type="ECO:0000303" key="7">
    <source>
    </source>
</evidence>
<evidence type="ECO:0000303" key="8">
    <source ref="1"/>
</evidence>
<evidence type="ECO:0000305" key="9"/>
<evidence type="ECO:0000312" key="10">
    <source>
        <dbReference type="MGI" id="MGI:1914413"/>
    </source>
</evidence>
<protein>
    <recommendedName>
        <fullName evidence="9">PAT complex subunit CCDC47</fullName>
    </recommendedName>
    <alternativeName>
        <fullName evidence="8">Adipocyte-specific protein 4</fullName>
    </alternativeName>
    <alternativeName>
        <fullName evidence="7">Calumin</fullName>
    </alternativeName>
    <alternativeName>
        <fullName>Coiled-coil domain-containing protein 47</fullName>
    </alternativeName>
</protein>
<keyword id="KW-0025">Alternative splicing</keyword>
<keyword id="KW-0143">Chaperone</keyword>
<keyword id="KW-0175">Coiled coil</keyword>
<keyword id="KW-0256">Endoplasmic reticulum</keyword>
<keyword id="KW-0325">Glycoprotein</keyword>
<keyword id="KW-0472">Membrane</keyword>
<keyword id="KW-1185">Reference proteome</keyword>
<keyword id="KW-0732">Signal</keyword>
<keyword id="KW-0812">Transmembrane</keyword>
<keyword id="KW-1133">Transmembrane helix</keyword>
<feature type="signal peptide" evidence="3">
    <location>
        <begin position="1"/>
        <end position="20"/>
    </location>
</feature>
<feature type="chain" id="PRO_0000235799" description="PAT complex subunit CCDC47">
    <location>
        <begin position="21"/>
        <end position="483"/>
    </location>
</feature>
<feature type="topological domain" description="Cytoplasmic" evidence="1">
    <location>
        <begin position="21"/>
        <end position="135"/>
    </location>
</feature>
<feature type="transmembrane region" description="Helical" evidence="3">
    <location>
        <begin position="136"/>
        <end position="156"/>
    </location>
</feature>
<feature type="topological domain" description="Lumenal" evidence="1">
    <location>
        <begin position="157"/>
        <end position="483"/>
    </location>
</feature>
<feature type="region of interest" description="Disordered" evidence="4">
    <location>
        <begin position="46"/>
        <end position="119"/>
    </location>
</feature>
<feature type="region of interest" description="Disordered" evidence="4">
    <location>
        <begin position="424"/>
        <end position="483"/>
    </location>
</feature>
<feature type="coiled-coil region" evidence="3">
    <location>
        <begin position="450"/>
        <end position="483"/>
    </location>
</feature>
<feature type="compositionally biased region" description="Acidic residues" evidence="4">
    <location>
        <begin position="60"/>
        <end position="104"/>
    </location>
</feature>
<feature type="compositionally biased region" description="Basic and acidic residues" evidence="4">
    <location>
        <begin position="105"/>
        <end position="118"/>
    </location>
</feature>
<feature type="compositionally biased region" description="Basic and acidic residues" evidence="4">
    <location>
        <begin position="430"/>
        <end position="472"/>
    </location>
</feature>
<feature type="compositionally biased region" description="Basic residues" evidence="4">
    <location>
        <begin position="473"/>
        <end position="483"/>
    </location>
</feature>
<feature type="glycosylation site" description="N-linked (GlcNAc...) asparagine" evidence="3">
    <location>
        <position position="178"/>
    </location>
</feature>
<feature type="splice variant" id="VSP_018479" description="In isoform 3." evidence="6">
    <location>
        <begin position="1"/>
        <end position="316"/>
    </location>
</feature>
<feature type="splice variant" id="VSP_018480" description="In isoform 2." evidence="6">
    <original>EAALRREQKKLEKKQMKMKQIKVKAM</original>
    <variation>VRHSEARLLGSASLLCGFMF</variation>
    <location>
        <begin position="458"/>
        <end position="483"/>
    </location>
</feature>
<feature type="sequence conflict" description="In Ref. 2; BAB27896/BAE36760." evidence="9" ref="2">
    <original>T</original>
    <variation>A</variation>
    <location>
        <position position="111"/>
    </location>
</feature>
<feature type="sequence conflict" description="In Ref. 2; BAC37406." evidence="9" ref="2">
    <original>G</original>
    <variation>S</variation>
    <location>
        <position position="145"/>
    </location>
</feature>
<gene>
    <name evidence="10" type="primary">Ccdc47</name>
    <name evidence="8" type="synonym">Asp4</name>
</gene>
<reference key="1">
    <citation type="submission" date="2000-03" db="EMBL/GenBank/DDBJ databases">
        <title>Adipocyte-specific protein 4, a novel protein upregulated during adipocyte differentiation.</title>
        <authorList>
            <person name="Tsuruga H."/>
        </authorList>
    </citation>
    <scope>NUCLEOTIDE SEQUENCE [MRNA] (ISOFORM 1)</scope>
</reference>
<reference key="2">
    <citation type="journal article" date="2005" name="Science">
        <title>The transcriptional landscape of the mammalian genome.</title>
        <authorList>
            <person name="Carninci P."/>
            <person name="Kasukawa T."/>
            <person name="Katayama S."/>
            <person name="Gough J."/>
            <person name="Frith M.C."/>
            <person name="Maeda N."/>
            <person name="Oyama R."/>
            <person name="Ravasi T."/>
            <person name="Lenhard B."/>
            <person name="Wells C."/>
            <person name="Kodzius R."/>
            <person name="Shimokawa K."/>
            <person name="Bajic V.B."/>
            <person name="Brenner S.E."/>
            <person name="Batalov S."/>
            <person name="Forrest A.R."/>
            <person name="Zavolan M."/>
            <person name="Davis M.J."/>
            <person name="Wilming L.G."/>
            <person name="Aidinis V."/>
            <person name="Allen J.E."/>
            <person name="Ambesi-Impiombato A."/>
            <person name="Apweiler R."/>
            <person name="Aturaliya R.N."/>
            <person name="Bailey T.L."/>
            <person name="Bansal M."/>
            <person name="Baxter L."/>
            <person name="Beisel K.W."/>
            <person name="Bersano T."/>
            <person name="Bono H."/>
            <person name="Chalk A.M."/>
            <person name="Chiu K.P."/>
            <person name="Choudhary V."/>
            <person name="Christoffels A."/>
            <person name="Clutterbuck D.R."/>
            <person name="Crowe M.L."/>
            <person name="Dalla E."/>
            <person name="Dalrymple B.P."/>
            <person name="de Bono B."/>
            <person name="Della Gatta G."/>
            <person name="di Bernardo D."/>
            <person name="Down T."/>
            <person name="Engstrom P."/>
            <person name="Fagiolini M."/>
            <person name="Faulkner G."/>
            <person name="Fletcher C.F."/>
            <person name="Fukushima T."/>
            <person name="Furuno M."/>
            <person name="Futaki S."/>
            <person name="Gariboldi M."/>
            <person name="Georgii-Hemming P."/>
            <person name="Gingeras T.R."/>
            <person name="Gojobori T."/>
            <person name="Green R.E."/>
            <person name="Gustincich S."/>
            <person name="Harbers M."/>
            <person name="Hayashi Y."/>
            <person name="Hensch T.K."/>
            <person name="Hirokawa N."/>
            <person name="Hill D."/>
            <person name="Huminiecki L."/>
            <person name="Iacono M."/>
            <person name="Ikeo K."/>
            <person name="Iwama A."/>
            <person name="Ishikawa T."/>
            <person name="Jakt M."/>
            <person name="Kanapin A."/>
            <person name="Katoh M."/>
            <person name="Kawasawa Y."/>
            <person name="Kelso J."/>
            <person name="Kitamura H."/>
            <person name="Kitano H."/>
            <person name="Kollias G."/>
            <person name="Krishnan S.P."/>
            <person name="Kruger A."/>
            <person name="Kummerfeld S.K."/>
            <person name="Kurochkin I.V."/>
            <person name="Lareau L.F."/>
            <person name="Lazarevic D."/>
            <person name="Lipovich L."/>
            <person name="Liu J."/>
            <person name="Liuni S."/>
            <person name="McWilliam S."/>
            <person name="Madan Babu M."/>
            <person name="Madera M."/>
            <person name="Marchionni L."/>
            <person name="Matsuda H."/>
            <person name="Matsuzawa S."/>
            <person name="Miki H."/>
            <person name="Mignone F."/>
            <person name="Miyake S."/>
            <person name="Morris K."/>
            <person name="Mottagui-Tabar S."/>
            <person name="Mulder N."/>
            <person name="Nakano N."/>
            <person name="Nakauchi H."/>
            <person name="Ng P."/>
            <person name="Nilsson R."/>
            <person name="Nishiguchi S."/>
            <person name="Nishikawa S."/>
            <person name="Nori F."/>
            <person name="Ohara O."/>
            <person name="Okazaki Y."/>
            <person name="Orlando V."/>
            <person name="Pang K.C."/>
            <person name="Pavan W.J."/>
            <person name="Pavesi G."/>
            <person name="Pesole G."/>
            <person name="Petrovsky N."/>
            <person name="Piazza S."/>
            <person name="Reed J."/>
            <person name="Reid J.F."/>
            <person name="Ring B.Z."/>
            <person name="Ringwald M."/>
            <person name="Rost B."/>
            <person name="Ruan Y."/>
            <person name="Salzberg S.L."/>
            <person name="Sandelin A."/>
            <person name="Schneider C."/>
            <person name="Schoenbach C."/>
            <person name="Sekiguchi K."/>
            <person name="Semple C.A."/>
            <person name="Seno S."/>
            <person name="Sessa L."/>
            <person name="Sheng Y."/>
            <person name="Shibata Y."/>
            <person name="Shimada H."/>
            <person name="Shimada K."/>
            <person name="Silva D."/>
            <person name="Sinclair B."/>
            <person name="Sperling S."/>
            <person name="Stupka E."/>
            <person name="Sugiura K."/>
            <person name="Sultana R."/>
            <person name="Takenaka Y."/>
            <person name="Taki K."/>
            <person name="Tammoja K."/>
            <person name="Tan S.L."/>
            <person name="Tang S."/>
            <person name="Taylor M.S."/>
            <person name="Tegner J."/>
            <person name="Teichmann S.A."/>
            <person name="Ueda H.R."/>
            <person name="van Nimwegen E."/>
            <person name="Verardo R."/>
            <person name="Wei C.L."/>
            <person name="Yagi K."/>
            <person name="Yamanishi H."/>
            <person name="Zabarovsky E."/>
            <person name="Zhu S."/>
            <person name="Zimmer A."/>
            <person name="Hide W."/>
            <person name="Bult C."/>
            <person name="Grimmond S.M."/>
            <person name="Teasdale R.D."/>
            <person name="Liu E.T."/>
            <person name="Brusic V."/>
            <person name="Quackenbush J."/>
            <person name="Wahlestedt C."/>
            <person name="Mattick J.S."/>
            <person name="Hume D.A."/>
            <person name="Kai C."/>
            <person name="Sasaki D."/>
            <person name="Tomaru Y."/>
            <person name="Fukuda S."/>
            <person name="Kanamori-Katayama M."/>
            <person name="Suzuki M."/>
            <person name="Aoki J."/>
            <person name="Arakawa T."/>
            <person name="Iida J."/>
            <person name="Imamura K."/>
            <person name="Itoh M."/>
            <person name="Kato T."/>
            <person name="Kawaji H."/>
            <person name="Kawagashira N."/>
            <person name="Kawashima T."/>
            <person name="Kojima M."/>
            <person name="Kondo S."/>
            <person name="Konno H."/>
            <person name="Nakano K."/>
            <person name="Ninomiya N."/>
            <person name="Nishio T."/>
            <person name="Okada M."/>
            <person name="Plessy C."/>
            <person name="Shibata K."/>
            <person name="Shiraki T."/>
            <person name="Suzuki S."/>
            <person name="Tagami M."/>
            <person name="Waki K."/>
            <person name="Watahiki A."/>
            <person name="Okamura-Oho Y."/>
            <person name="Suzuki H."/>
            <person name="Kawai J."/>
            <person name="Hayashizaki Y."/>
        </authorList>
    </citation>
    <scope>NUCLEOTIDE SEQUENCE [LARGE SCALE MRNA] (ISOFORMS 1; 2 AND 3)</scope>
    <source>
        <strain>C57BL/6J</strain>
        <tissue>Egg</tissue>
        <tissue>Embryo</tissue>
        <tissue>Lung</tissue>
        <tissue>Placenta</tissue>
    </source>
</reference>
<reference key="3">
    <citation type="journal article" date="2009" name="PLoS Biol.">
        <title>Lineage-specific biology revealed by a finished genome assembly of the mouse.</title>
        <authorList>
            <person name="Church D.M."/>
            <person name="Goodstadt L."/>
            <person name="Hillier L.W."/>
            <person name="Zody M.C."/>
            <person name="Goldstein S."/>
            <person name="She X."/>
            <person name="Bult C.J."/>
            <person name="Agarwala R."/>
            <person name="Cherry J.L."/>
            <person name="DiCuccio M."/>
            <person name="Hlavina W."/>
            <person name="Kapustin Y."/>
            <person name="Meric P."/>
            <person name="Maglott D."/>
            <person name="Birtle Z."/>
            <person name="Marques A.C."/>
            <person name="Graves T."/>
            <person name="Zhou S."/>
            <person name="Teague B."/>
            <person name="Potamousis K."/>
            <person name="Churas C."/>
            <person name="Place M."/>
            <person name="Herschleb J."/>
            <person name="Runnheim R."/>
            <person name="Forrest D."/>
            <person name="Amos-Landgraf J."/>
            <person name="Schwartz D.C."/>
            <person name="Cheng Z."/>
            <person name="Lindblad-Toh K."/>
            <person name="Eichler E.E."/>
            <person name="Ponting C.P."/>
        </authorList>
    </citation>
    <scope>NUCLEOTIDE SEQUENCE [LARGE SCALE GENOMIC DNA]</scope>
    <source>
        <strain>C57BL/6J</strain>
    </source>
</reference>
<reference key="4">
    <citation type="journal article" date="2010" name="Cell">
        <title>A tissue-specific atlas of mouse protein phosphorylation and expression.</title>
        <authorList>
            <person name="Huttlin E.L."/>
            <person name="Jedrychowski M.P."/>
            <person name="Elias J.E."/>
            <person name="Goswami T."/>
            <person name="Rad R."/>
            <person name="Beausoleil S.A."/>
            <person name="Villen J."/>
            <person name="Haas W."/>
            <person name="Sowa M.E."/>
            <person name="Gygi S.P."/>
        </authorList>
    </citation>
    <scope>IDENTIFICATION BY MASS SPECTROMETRY [LARGE SCALE ANALYSIS]</scope>
    <source>
        <tissue>Brain</tissue>
        <tissue>Brown adipose tissue</tissue>
        <tissue>Heart</tissue>
        <tissue>Kidney</tissue>
        <tissue>Liver</tissue>
        <tissue>Lung</tissue>
        <tissue>Pancreas</tissue>
        <tissue>Spleen</tissue>
        <tissue>Testis</tissue>
    </source>
</reference>
<reference key="5">
    <citation type="journal article" date="2014" name="Dev. Biol.">
        <title>Contribution of calumin to embryogenesis through participation in the endoplasmic reticulum-associated degradation activity.</title>
        <authorList>
            <person name="Yamamoto S."/>
            <person name="Yamazaki T."/>
            <person name="Komazaki S."/>
            <person name="Yamashita T."/>
            <person name="Osaki M."/>
            <person name="Matsubayashi M."/>
            <person name="Kidoya H."/>
            <person name="Takakura N."/>
            <person name="Yamazaki D."/>
            <person name="Kakizawa S."/>
        </authorList>
    </citation>
    <scope>FUNCTION</scope>
    <scope>SUBCELLULAR LOCATION</scope>
    <scope>TISSUE SPECIFICITY</scope>
    <scope>INTERACTION WITH VCP; HSPA5; DERL1; DERL2 AND SELENOS</scope>
    <scope>DISRUPTION PHENOTYPE</scope>
</reference>
<comment type="function">
    <text evidence="1 2 5">Component of the multi-pass translocon (MPT) complex that mediates insertion of multi-pass membrane proteins into the lipid bilayer of membranes (By similarity). The MPT complex takes over after the SEC61 complex: following membrane insertion of the first few transmembrane segments of proteins by the SEC61 complex, the MPT complex occludes the lateral gate of the SEC61 complex to promote insertion of subsequent transmembrane regions (By similarity). Within the MPT complex, the PAT subcomplex sequesters any highly polar regions in the transmembrane domains away from the non-polar membrane environment until they can be buried in the interior of the fully assembled protein (By similarity). Within the PAT subcomplex, CCDC47 occludes the lateral gate of the SEC61 complex (By similarity). Involved in the regulation of calcium ion homeostasis in the ER (By similarity). Required for proper protein degradation via the ERAD (ER-associated degradation) pathway (By similarity). Has an essential role in the maintenance of ER organization during embryogenesis (PubMed:25009997).</text>
</comment>
<comment type="subunit">
    <text evidence="2 5">Component of the PAT complex, composed of WDR83OS/Asterix and CCDC47 (By similarity). The PAT complex is part of the multi-pass translocon (MPT) complex, composed of three subcomplexes, the GEL complex (composed of RAB5IF/OPTI and TMCO1), the BOS complex (composed of NCLN/Nicalin, NOMO1 and TMEM147) and the PAT complex (composed of WDR83OS/Asterix and CCDC47) (By similarity). The MPT complex associates with the SEC61 complex (By similarity). Interacts with VCP, HSPA5, DERL1, DERL2 and SELENOS (PubMed:25009997).</text>
</comment>
<comment type="subcellular location">
    <subcellularLocation>
        <location evidence="2">Endoplasmic reticulum membrane</location>
        <topology evidence="3">Single-pass type I membrane protein</topology>
    </subcellularLocation>
    <subcellularLocation>
        <location evidence="5">Rough endoplasmic reticulum membrane</location>
        <topology evidence="3">Single-pass type I membrane protein</topology>
    </subcellularLocation>
</comment>
<comment type="alternative products">
    <event type="alternative splicing"/>
    <isoform>
        <id>Q9D024-1</id>
        <name>1</name>
        <sequence type="displayed"/>
    </isoform>
    <isoform>
        <id>Q9D024-2</id>
        <name>2</name>
        <sequence type="described" ref="VSP_018480"/>
    </isoform>
    <isoform>
        <id>Q9D024-3</id>
        <name>3</name>
        <sequence type="described" ref="VSP_018479"/>
    </isoform>
</comment>
<comment type="tissue specificity">
    <text evidence="5">In the embryo, expressed in the endodermal layer of the yolk sac and in the small intestine.</text>
</comment>
<comment type="disruption phenotype">
    <text evidence="5">CCDC47 knockout leads to embryonic lethality at mid-gestation, between 10.5 and 11.5 dpc. Mutant embryos at 8.5-10.5 dpc reveal several anomalies including vascular abnormalities in yolk sacs, developmental retardation, atrophic neural tubes, dilated left ventricles, poorly developed myocardium, and paucity of blood cells in the dorsal aorta. Yolk sac endoderm cells show alterations associated with endoplasmic reticulum stress, including lipid droplet accumulation, endoplasmic reticulum fragmentation and dissociation of ribosomes.</text>
</comment>
<comment type="similarity">
    <text evidence="9">Belongs to the CCDC47 family.</text>
</comment>
<organism>
    <name type="scientific">Mus musculus</name>
    <name type="common">Mouse</name>
    <dbReference type="NCBI Taxonomy" id="10090"/>
    <lineage>
        <taxon>Eukaryota</taxon>
        <taxon>Metazoa</taxon>
        <taxon>Chordata</taxon>
        <taxon>Craniata</taxon>
        <taxon>Vertebrata</taxon>
        <taxon>Euteleostomi</taxon>
        <taxon>Mammalia</taxon>
        <taxon>Eutheria</taxon>
        <taxon>Euarchontoglires</taxon>
        <taxon>Glires</taxon>
        <taxon>Rodentia</taxon>
        <taxon>Myomorpha</taxon>
        <taxon>Muroidea</taxon>
        <taxon>Muridae</taxon>
        <taxon>Murinae</taxon>
        <taxon>Mus</taxon>
        <taxon>Mus</taxon>
    </lineage>
</organism>
<dbReference type="EMBL" id="AB040489">
    <property type="protein sequence ID" value="BAB68502.1"/>
    <property type="molecule type" value="mRNA"/>
</dbReference>
<dbReference type="EMBL" id="AK011882">
    <property type="protein sequence ID" value="BAB27896.1"/>
    <property type="molecule type" value="mRNA"/>
</dbReference>
<dbReference type="EMBL" id="AK078812">
    <property type="protein sequence ID" value="BAC37406.1"/>
    <property type="molecule type" value="mRNA"/>
</dbReference>
<dbReference type="EMBL" id="AK132273">
    <property type="protein sequence ID" value="BAE21073.1"/>
    <property type="molecule type" value="mRNA"/>
</dbReference>
<dbReference type="EMBL" id="AK162160">
    <property type="protein sequence ID" value="BAE36760.1"/>
    <property type="molecule type" value="mRNA"/>
</dbReference>
<dbReference type="EMBL" id="AL596331">
    <property type="status" value="NOT_ANNOTATED_CDS"/>
    <property type="molecule type" value="Genomic_DNA"/>
</dbReference>
<dbReference type="CCDS" id="CCDS25551.1">
    <molecule id="Q9D024-1"/>
</dbReference>
<dbReference type="RefSeq" id="NP_080285.2">
    <molecule id="Q9D024-1"/>
    <property type="nucleotide sequence ID" value="NM_026009.2"/>
</dbReference>
<dbReference type="SMR" id="Q9D024"/>
<dbReference type="BioGRID" id="211988">
    <property type="interactions" value="7"/>
</dbReference>
<dbReference type="FunCoup" id="Q9D024">
    <property type="interactions" value="2861"/>
</dbReference>
<dbReference type="STRING" id="10090.ENSMUSP00000002043"/>
<dbReference type="GlyCosmos" id="Q9D024">
    <property type="glycosylation" value="1 site, No reported glycans"/>
</dbReference>
<dbReference type="GlyGen" id="Q9D024">
    <property type="glycosylation" value="2 sites, 1 O-linked glycan (1 site)"/>
</dbReference>
<dbReference type="iPTMnet" id="Q9D024"/>
<dbReference type="PhosphoSitePlus" id="Q9D024"/>
<dbReference type="SwissPalm" id="Q9D024"/>
<dbReference type="jPOST" id="Q9D024"/>
<dbReference type="PaxDb" id="10090-ENSMUSP00000002043"/>
<dbReference type="PeptideAtlas" id="Q9D024"/>
<dbReference type="ProteomicsDB" id="281500">
    <molecule id="Q9D024-1"/>
</dbReference>
<dbReference type="ProteomicsDB" id="281501">
    <molecule id="Q9D024-2"/>
</dbReference>
<dbReference type="ProteomicsDB" id="281502">
    <molecule id="Q9D024-3"/>
</dbReference>
<dbReference type="Pumba" id="Q9D024"/>
<dbReference type="Antibodypedia" id="31338">
    <property type="antibodies" value="170 antibodies from 26 providers"/>
</dbReference>
<dbReference type="Ensembl" id="ENSMUST00000002043.10">
    <molecule id="Q9D024-1"/>
    <property type="protein sequence ID" value="ENSMUSP00000002043.4"/>
    <property type="gene ID" value="ENSMUSG00000078622.9"/>
</dbReference>
<dbReference type="Ensembl" id="ENSMUST00000106865.8">
    <molecule id="Q9D024-3"/>
    <property type="protein sequence ID" value="ENSMUSP00000102478.2"/>
    <property type="gene ID" value="ENSMUSG00000078622.9"/>
</dbReference>
<dbReference type="GeneID" id="67163"/>
<dbReference type="KEGG" id="mmu:67163"/>
<dbReference type="UCSC" id="uc007lyi.1">
    <molecule id="Q9D024-1"/>
    <property type="organism name" value="mouse"/>
</dbReference>
<dbReference type="UCSC" id="uc007lyj.1">
    <molecule id="Q9D024-2"/>
    <property type="organism name" value="mouse"/>
</dbReference>
<dbReference type="AGR" id="MGI:1914413"/>
<dbReference type="CTD" id="57003"/>
<dbReference type="MGI" id="MGI:1914413">
    <property type="gene designation" value="Ccdc47"/>
</dbReference>
<dbReference type="VEuPathDB" id="HostDB:ENSMUSG00000078622"/>
<dbReference type="eggNOG" id="KOG2357">
    <property type="taxonomic scope" value="Eukaryota"/>
</dbReference>
<dbReference type="GeneTree" id="ENSGT00390000013997"/>
<dbReference type="HOGENOM" id="CLU_033196_1_0_1"/>
<dbReference type="InParanoid" id="Q9D024"/>
<dbReference type="OMA" id="MHLVRDM"/>
<dbReference type="OrthoDB" id="10039147at2759"/>
<dbReference type="PhylomeDB" id="Q9D024"/>
<dbReference type="TreeFam" id="TF314902"/>
<dbReference type="BioGRID-ORCS" id="67163">
    <property type="hits" value="5 hits in 78 CRISPR screens"/>
</dbReference>
<dbReference type="CD-CODE" id="CE726F99">
    <property type="entry name" value="Postsynaptic density"/>
</dbReference>
<dbReference type="ChiTaRS" id="Ccdc47">
    <property type="organism name" value="mouse"/>
</dbReference>
<dbReference type="PRO" id="PR:Q9D024"/>
<dbReference type="Proteomes" id="UP000000589">
    <property type="component" value="Chromosome 11"/>
</dbReference>
<dbReference type="RNAct" id="Q9D024">
    <property type="molecule type" value="protein"/>
</dbReference>
<dbReference type="Bgee" id="ENSMUSG00000078622">
    <property type="expression patterns" value="Expressed in ciliary body and 241 other cell types or tissues"/>
</dbReference>
<dbReference type="ExpressionAtlas" id="Q9D024">
    <property type="expression patterns" value="baseline and differential"/>
</dbReference>
<dbReference type="GO" id="GO:0005783">
    <property type="term" value="C:endoplasmic reticulum"/>
    <property type="evidence" value="ECO:0000314"/>
    <property type="project" value="MGI"/>
</dbReference>
<dbReference type="GO" id="GO:0005789">
    <property type="term" value="C:endoplasmic reticulum membrane"/>
    <property type="evidence" value="ECO:0000250"/>
    <property type="project" value="UniProtKB"/>
</dbReference>
<dbReference type="GO" id="GO:0160064">
    <property type="term" value="C:multi-pass translocon complex"/>
    <property type="evidence" value="ECO:0000250"/>
    <property type="project" value="UniProtKB"/>
</dbReference>
<dbReference type="GO" id="GO:0101031">
    <property type="term" value="C:protein folding chaperone complex"/>
    <property type="evidence" value="ECO:0007669"/>
    <property type="project" value="Ensembl"/>
</dbReference>
<dbReference type="GO" id="GO:0005791">
    <property type="term" value="C:rough endoplasmic reticulum"/>
    <property type="evidence" value="ECO:0000314"/>
    <property type="project" value="MGI"/>
</dbReference>
<dbReference type="GO" id="GO:0030867">
    <property type="term" value="C:rough endoplasmic reticulum membrane"/>
    <property type="evidence" value="ECO:0007669"/>
    <property type="project" value="UniProtKB-SubCell"/>
</dbReference>
<dbReference type="GO" id="GO:0005509">
    <property type="term" value="F:calcium ion binding"/>
    <property type="evidence" value="ECO:0000314"/>
    <property type="project" value="MGI"/>
</dbReference>
<dbReference type="GO" id="GO:0044183">
    <property type="term" value="F:protein folding chaperone"/>
    <property type="evidence" value="ECO:0000250"/>
    <property type="project" value="UniProtKB"/>
</dbReference>
<dbReference type="GO" id="GO:0043022">
    <property type="term" value="F:ribosome binding"/>
    <property type="evidence" value="ECO:0000250"/>
    <property type="project" value="UniProtKB"/>
</dbReference>
<dbReference type="GO" id="GO:0055074">
    <property type="term" value="P:calcium ion homeostasis"/>
    <property type="evidence" value="ECO:0000315"/>
    <property type="project" value="MGI"/>
</dbReference>
<dbReference type="GO" id="GO:0032469">
    <property type="term" value="P:endoplasmic reticulum calcium ion homeostasis"/>
    <property type="evidence" value="ECO:0000250"/>
    <property type="project" value="UniProtKB"/>
</dbReference>
<dbReference type="GO" id="GO:0007029">
    <property type="term" value="P:endoplasmic reticulum organization"/>
    <property type="evidence" value="ECO:0000315"/>
    <property type="project" value="MGI"/>
</dbReference>
<dbReference type="GO" id="GO:0006983">
    <property type="term" value="P:ER overload response"/>
    <property type="evidence" value="ECO:0000315"/>
    <property type="project" value="MGI"/>
</dbReference>
<dbReference type="GO" id="GO:0036503">
    <property type="term" value="P:ERAD pathway"/>
    <property type="evidence" value="ECO:0000315"/>
    <property type="project" value="MGI"/>
</dbReference>
<dbReference type="GO" id="GO:0160063">
    <property type="term" value="P:multi-pass transmembrane protein insertion into ER membrane"/>
    <property type="evidence" value="ECO:0000250"/>
    <property type="project" value="UniProtKB"/>
</dbReference>
<dbReference type="GO" id="GO:0009791">
    <property type="term" value="P:post-embryonic development"/>
    <property type="evidence" value="ECO:0000315"/>
    <property type="project" value="MGI"/>
</dbReference>
<dbReference type="GO" id="GO:0045048">
    <property type="term" value="P:protein insertion into ER membrane"/>
    <property type="evidence" value="ECO:0000250"/>
    <property type="project" value="UniProtKB"/>
</dbReference>
<dbReference type="InterPro" id="IPR012879">
    <property type="entry name" value="CCDC47"/>
</dbReference>
<dbReference type="PANTHER" id="PTHR12883">
    <property type="entry name" value="ADIPOCYTE-SPECIFIC PROTEIN 4-RELATED"/>
    <property type="match status" value="1"/>
</dbReference>
<dbReference type="PANTHER" id="PTHR12883:SF0">
    <property type="entry name" value="PAT COMPLEX SUBUNIT CCDC47"/>
    <property type="match status" value="1"/>
</dbReference>
<dbReference type="Pfam" id="PF07946">
    <property type="entry name" value="CCDC47"/>
    <property type="match status" value="1"/>
</dbReference>
<proteinExistence type="evidence at protein level"/>